<sequence length="421" mass="47996">MDLENKVKKMGLGHEQGFGAPCLKCKEKCEGFELHFWRKICRNCKCGQEEHDVLLSNEEDRKVGKLFEDTKYTTLIAKLKSDGIPMYKRNVMILTNPVAAKKNVSINTVTYEWAPPVQNQALARQYMQMLPKEKQPVAGSEGAQYRKKQLAKQLPAHDQDPSKCHELSPREVKEMEQFVKKYKSEALGVGDVKLPCEMDAQGPKQMNIPGGDRSTPAAVGAMEDKSAEHKRTQYSCYCCKLSMKEGDPAIYAERAGYDKLWHPACFVCSTCHELLVDMIYFWKNEKLYCGRHYCDSEKPRCAGCDELIFSNEYTQAENQNWHLKHFCCFDCDSILAGEIYVMVNDKPVCKPCYVKNHAVVCQGCHNAIDPEVQRVTYNNFSWHASTECFLCSCCSKCLIGQKFMPVEGMVFCSVECKKRMS</sequence>
<keyword id="KW-0965">Cell junction</keyword>
<keyword id="KW-0963">Cytoplasm</keyword>
<keyword id="KW-0440">LIM domain</keyword>
<keyword id="KW-0479">Metal-binding</keyword>
<keyword id="KW-1185">Reference proteome</keyword>
<keyword id="KW-0677">Repeat</keyword>
<keyword id="KW-0862">Zinc</keyword>
<comment type="function">
    <text evidence="1">Scaffold protein that may play a role in cell adhesion, cell spreading and in the reorganization of the actin cytoskeleton. Plays a role in the regulation of cell proliferation. May act as a tumor suppressor (By similarity).</text>
</comment>
<comment type="subunit">
    <text evidence="1">Interacts via LIM domain 1 with ZYX. Interacts (via LIM domain 3) with ENAH and VASP. Interacts with ALKBH4, talin, actin, alpha-actinin, GRIP1 and PXN (By similarity). Interacts (via LIM domain 2) with ACTL7A (via N-terminus). Heterodimer with ACTL7A; the heterodimer interacts with ENAH to form a heterotrimer (By similarity).</text>
</comment>
<comment type="subcellular location">
    <subcellularLocation>
        <location evidence="1">Cytoplasm</location>
    </subcellularLocation>
    <subcellularLocation>
        <location evidence="1">Cell junction</location>
        <location evidence="1">Focal adhesion</location>
    </subcellularLocation>
    <text evidence="1">Detected along actin stress fibers.</text>
</comment>
<comment type="domain">
    <text evidence="1">The N-terminal and the C-terminal halves of the protein can associate with each other, thereby hindering interactions with ZYX.</text>
</comment>
<comment type="similarity">
    <text evidence="5">Belongs to the prickle / espinas / testin family.</text>
</comment>
<evidence type="ECO:0000250" key="1"/>
<evidence type="ECO:0000255" key="2">
    <source>
        <dbReference type="PROSITE-ProRule" id="PRU00125"/>
    </source>
</evidence>
<evidence type="ECO:0000255" key="3">
    <source>
        <dbReference type="PROSITE-ProRule" id="PRU00636"/>
    </source>
</evidence>
<evidence type="ECO:0000256" key="4">
    <source>
        <dbReference type="SAM" id="MobiDB-lite"/>
    </source>
</evidence>
<evidence type="ECO:0000305" key="5"/>
<name>TES_PANTR</name>
<organism>
    <name type="scientific">Pan troglodytes</name>
    <name type="common">Chimpanzee</name>
    <dbReference type="NCBI Taxonomy" id="9598"/>
    <lineage>
        <taxon>Eukaryota</taxon>
        <taxon>Metazoa</taxon>
        <taxon>Chordata</taxon>
        <taxon>Craniata</taxon>
        <taxon>Vertebrata</taxon>
        <taxon>Euteleostomi</taxon>
        <taxon>Mammalia</taxon>
        <taxon>Eutheria</taxon>
        <taxon>Euarchontoglires</taxon>
        <taxon>Primates</taxon>
        <taxon>Haplorrhini</taxon>
        <taxon>Catarrhini</taxon>
        <taxon>Hominidae</taxon>
        <taxon>Pan</taxon>
    </lineage>
</organism>
<feature type="chain" id="PRO_0000226350" description="Testin">
    <location>
        <begin position="1"/>
        <end position="421"/>
    </location>
</feature>
<feature type="domain" description="PET" evidence="3">
    <location>
        <begin position="92"/>
        <end position="199"/>
    </location>
</feature>
<feature type="domain" description="LIM zinc-binding 1" evidence="2">
    <location>
        <begin position="234"/>
        <end position="297"/>
    </location>
</feature>
<feature type="domain" description="LIM zinc-binding 2" evidence="2">
    <location>
        <begin position="299"/>
        <end position="359"/>
    </location>
</feature>
<feature type="domain" description="LIM zinc-binding 3" evidence="2">
    <location>
        <begin position="362"/>
        <end position="421"/>
    </location>
</feature>
<feature type="region of interest" description="Disordered" evidence="4">
    <location>
        <begin position="133"/>
        <end position="164"/>
    </location>
</feature>
<feature type="compositionally biased region" description="Basic and acidic residues" evidence="4">
    <location>
        <begin position="155"/>
        <end position="164"/>
    </location>
</feature>
<reference key="1">
    <citation type="journal article" date="2003" name="Nature">
        <title>Comparative analyses of multi-species sequences from targeted genomic regions.</title>
        <authorList>
            <person name="Thomas J.W."/>
            <person name="Touchman J.W."/>
            <person name="Blakesley R.W."/>
            <person name="Bouffard G.G."/>
            <person name="Beckstrom-Sternberg S.M."/>
            <person name="Margulies E.H."/>
            <person name="Blanchette M."/>
            <person name="Siepel A.C."/>
            <person name="Thomas P.J."/>
            <person name="McDowell J.C."/>
            <person name="Maskeri B."/>
            <person name="Hansen N.F."/>
            <person name="Schwartz M.S."/>
            <person name="Weber R.J."/>
            <person name="Kent W.J."/>
            <person name="Karolchik D."/>
            <person name="Bruen T.C."/>
            <person name="Bevan R."/>
            <person name="Cutler D.J."/>
            <person name="Schwartz S."/>
            <person name="Elnitski L."/>
            <person name="Idol J.R."/>
            <person name="Prasad A.B."/>
            <person name="Lee-Lin S.-Q."/>
            <person name="Maduro V.V.B."/>
            <person name="Summers T.J."/>
            <person name="Portnoy M.E."/>
            <person name="Dietrich N.L."/>
            <person name="Akhter N."/>
            <person name="Ayele K."/>
            <person name="Benjamin B."/>
            <person name="Cariaga K."/>
            <person name="Brinkley C.P."/>
            <person name="Brooks S.Y."/>
            <person name="Granite S."/>
            <person name="Guan X."/>
            <person name="Gupta J."/>
            <person name="Haghighi P."/>
            <person name="Ho S.-L."/>
            <person name="Huang M.C."/>
            <person name="Karlins E."/>
            <person name="Laric P.L."/>
            <person name="Legaspi R."/>
            <person name="Lim M.J."/>
            <person name="Maduro Q.L."/>
            <person name="Masiello C.A."/>
            <person name="Mastrian S.D."/>
            <person name="McCloskey J.C."/>
            <person name="Pearson R."/>
            <person name="Stantripop S."/>
            <person name="Tiongson E.E."/>
            <person name="Tran J.T."/>
            <person name="Tsurgeon C."/>
            <person name="Vogt J.L."/>
            <person name="Walker M.A."/>
            <person name="Wetherby K.D."/>
            <person name="Wiggins L.S."/>
            <person name="Young A.C."/>
            <person name="Zhang L.-H."/>
            <person name="Osoegawa K."/>
            <person name="Zhu B."/>
            <person name="Zhao B."/>
            <person name="Shu C.L."/>
            <person name="De Jong P.J."/>
            <person name="Lawrence C.E."/>
            <person name="Smit A.F."/>
            <person name="Chakravarti A."/>
            <person name="Haussler D."/>
            <person name="Green P."/>
            <person name="Miller W."/>
            <person name="Green E.D."/>
        </authorList>
    </citation>
    <scope>NUCLEOTIDE SEQUENCE [LARGE SCALE GENOMIC DNA]</scope>
</reference>
<gene>
    <name type="primary">TES</name>
</gene>
<dbReference type="EMBL" id="DP000016">
    <property type="protein sequence ID" value="ABA90384.1"/>
    <property type="molecule type" value="Genomic_DNA"/>
</dbReference>
<dbReference type="RefSeq" id="NP_001121106.1">
    <property type="nucleotide sequence ID" value="NM_001127634.1"/>
</dbReference>
<dbReference type="SMR" id="Q2QLF4"/>
<dbReference type="FunCoup" id="Q2QLF4">
    <property type="interactions" value="925"/>
</dbReference>
<dbReference type="STRING" id="9598.ENSPTRP00000068947"/>
<dbReference type="PaxDb" id="9598-ENSPTRP00000043763"/>
<dbReference type="Ensembl" id="ENSPTRT00000048409.4">
    <property type="protein sequence ID" value="ENSPTRP00000043763.3"/>
    <property type="gene ID" value="ENSPTRG00000023877.6"/>
</dbReference>
<dbReference type="GeneID" id="463669"/>
<dbReference type="KEGG" id="ptr:463669"/>
<dbReference type="CTD" id="26136"/>
<dbReference type="VGNC" id="VGNC:4532">
    <property type="gene designation" value="TES"/>
</dbReference>
<dbReference type="eggNOG" id="KOG1704">
    <property type="taxonomic scope" value="Eukaryota"/>
</dbReference>
<dbReference type="GeneTree" id="ENSGT00940000155993"/>
<dbReference type="HOGENOM" id="CLU_008937_1_1_1"/>
<dbReference type="InParanoid" id="Q2QLF4"/>
<dbReference type="OMA" id="NFSCHQC"/>
<dbReference type="OrthoDB" id="50at9604"/>
<dbReference type="TreeFam" id="TF313265"/>
<dbReference type="Proteomes" id="UP000002277">
    <property type="component" value="Chromosome 7"/>
</dbReference>
<dbReference type="Bgee" id="ENSPTRG00000023877">
    <property type="expression patterns" value="Expressed in colon and 21 other cell types or tissues"/>
</dbReference>
<dbReference type="GO" id="GO:0005737">
    <property type="term" value="C:cytoplasm"/>
    <property type="evidence" value="ECO:0000250"/>
    <property type="project" value="UniProtKB"/>
</dbReference>
<dbReference type="GO" id="GO:0005925">
    <property type="term" value="C:focal adhesion"/>
    <property type="evidence" value="ECO:0007669"/>
    <property type="project" value="UniProtKB-SubCell"/>
</dbReference>
<dbReference type="GO" id="GO:0008270">
    <property type="term" value="F:zinc ion binding"/>
    <property type="evidence" value="ECO:0000250"/>
    <property type="project" value="UniProtKB"/>
</dbReference>
<dbReference type="GO" id="GO:0008285">
    <property type="term" value="P:negative regulation of cell population proliferation"/>
    <property type="evidence" value="ECO:0000250"/>
    <property type="project" value="UniProtKB"/>
</dbReference>
<dbReference type="CDD" id="cd09413">
    <property type="entry name" value="LIM1_Testin"/>
    <property type="match status" value="1"/>
</dbReference>
<dbReference type="CDD" id="cd09416">
    <property type="entry name" value="LIM2_Testin"/>
    <property type="match status" value="1"/>
</dbReference>
<dbReference type="CDD" id="cd09419">
    <property type="entry name" value="LIM3_Testin"/>
    <property type="match status" value="1"/>
</dbReference>
<dbReference type="CDD" id="cd09829">
    <property type="entry name" value="PET_testin"/>
    <property type="match status" value="1"/>
</dbReference>
<dbReference type="FunFam" id="2.10.110.10:FF:000061">
    <property type="entry name" value="Testin"/>
    <property type="match status" value="1"/>
</dbReference>
<dbReference type="FunFam" id="2.10.110.10:FF:000065">
    <property type="entry name" value="Testin"/>
    <property type="match status" value="1"/>
</dbReference>
<dbReference type="FunFam" id="2.10.110.10:FF:000005">
    <property type="entry name" value="Testin isoform 1"/>
    <property type="match status" value="1"/>
</dbReference>
<dbReference type="Gene3D" id="2.10.110.10">
    <property type="entry name" value="Cysteine Rich Protein"/>
    <property type="match status" value="3"/>
</dbReference>
<dbReference type="InterPro" id="IPR034958">
    <property type="entry name" value="LIM1_Testin"/>
</dbReference>
<dbReference type="InterPro" id="IPR034959">
    <property type="entry name" value="LIM2_Testin"/>
</dbReference>
<dbReference type="InterPro" id="IPR034960">
    <property type="entry name" value="LIM3_Testin"/>
</dbReference>
<dbReference type="InterPro" id="IPR010442">
    <property type="entry name" value="PET_domain"/>
</dbReference>
<dbReference type="InterPro" id="IPR033724">
    <property type="entry name" value="PET_testin"/>
</dbReference>
<dbReference type="InterPro" id="IPR047120">
    <property type="entry name" value="Pk/Esn/Tes"/>
</dbReference>
<dbReference type="InterPro" id="IPR001781">
    <property type="entry name" value="Znf_LIM"/>
</dbReference>
<dbReference type="PANTHER" id="PTHR24211">
    <property type="entry name" value="LIM DOMAIN-CONTAINING PROTEIN"/>
    <property type="match status" value="1"/>
</dbReference>
<dbReference type="PANTHER" id="PTHR24211:SF1">
    <property type="entry name" value="TESTIN"/>
    <property type="match status" value="1"/>
</dbReference>
<dbReference type="Pfam" id="PF00412">
    <property type="entry name" value="LIM"/>
    <property type="match status" value="3"/>
</dbReference>
<dbReference type="Pfam" id="PF06297">
    <property type="entry name" value="PET"/>
    <property type="match status" value="1"/>
</dbReference>
<dbReference type="SMART" id="SM00132">
    <property type="entry name" value="LIM"/>
    <property type="match status" value="3"/>
</dbReference>
<dbReference type="SUPFAM" id="SSF57716">
    <property type="entry name" value="Glucocorticoid receptor-like (DNA-binding domain)"/>
    <property type="match status" value="2"/>
</dbReference>
<dbReference type="PROSITE" id="PS00478">
    <property type="entry name" value="LIM_DOMAIN_1"/>
    <property type="match status" value="2"/>
</dbReference>
<dbReference type="PROSITE" id="PS50023">
    <property type="entry name" value="LIM_DOMAIN_2"/>
    <property type="match status" value="3"/>
</dbReference>
<dbReference type="PROSITE" id="PS51303">
    <property type="entry name" value="PET"/>
    <property type="match status" value="1"/>
</dbReference>
<protein>
    <recommendedName>
        <fullName>Testin</fullName>
    </recommendedName>
</protein>
<proteinExistence type="inferred from homology"/>
<accession>Q2QLF4</accession>